<reference key="1">
    <citation type="journal article" date="1996" name="Nucleic Acids Res.">
        <title>Complete sequence analysis of the genome of the bacterium Mycoplasma pneumoniae.</title>
        <authorList>
            <person name="Himmelreich R."/>
            <person name="Hilbert H."/>
            <person name="Plagens H."/>
            <person name="Pirkl E."/>
            <person name="Li B.-C."/>
            <person name="Herrmann R."/>
        </authorList>
    </citation>
    <scope>NUCLEOTIDE SEQUENCE [LARGE SCALE GENOMIC DNA]</scope>
    <source>
        <strain>ATCC 29342 / M129 / Subtype 1</strain>
    </source>
</reference>
<keyword id="KW-0002">3D-structure</keyword>
<keyword id="KW-1185">Reference proteome</keyword>
<protein>
    <recommendedName>
        <fullName>Uncharacterized protein MG237 homolog</fullName>
    </recommendedName>
</protein>
<proteinExistence type="evidence at protein level"/>
<organism>
    <name type="scientific">Mycoplasma pneumoniae (strain ATCC 29342 / M129 / Subtype 1)</name>
    <name type="common">Mycoplasmoides pneumoniae</name>
    <dbReference type="NCBI Taxonomy" id="272634"/>
    <lineage>
        <taxon>Bacteria</taxon>
        <taxon>Bacillati</taxon>
        <taxon>Mycoplasmatota</taxon>
        <taxon>Mycoplasmoidales</taxon>
        <taxon>Mycoplasmoidaceae</taxon>
        <taxon>Mycoplasmoides</taxon>
    </lineage>
</organism>
<dbReference type="EMBL" id="U00089">
    <property type="protein sequence ID" value="AAB96154.1"/>
    <property type="molecule type" value="Genomic_DNA"/>
</dbReference>
<dbReference type="PIR" id="S73832">
    <property type="entry name" value="S73832"/>
</dbReference>
<dbReference type="RefSeq" id="NP_110018.1">
    <property type="nucleotide sequence ID" value="NC_000912.1"/>
</dbReference>
<dbReference type="RefSeq" id="WP_010874686.1">
    <property type="nucleotide sequence ID" value="NZ_OU342337.1"/>
</dbReference>
<dbReference type="PDB" id="1TD6">
    <property type="method" value="X-ray"/>
    <property type="resolution" value="2.50 A"/>
    <property type="chains" value="A=1-294"/>
</dbReference>
<dbReference type="PDBsum" id="1TD6"/>
<dbReference type="SMR" id="P75455"/>
<dbReference type="STRING" id="272634.MPN_330"/>
<dbReference type="EnsemblBacteria" id="AAB96154">
    <property type="protein sequence ID" value="AAB96154"/>
    <property type="gene ID" value="MPN_330"/>
</dbReference>
<dbReference type="KEGG" id="mpn:MPN_330"/>
<dbReference type="PATRIC" id="fig|272634.6.peg.354"/>
<dbReference type="HOGENOM" id="CLU_946012_0_0_14"/>
<dbReference type="OrthoDB" id="400159at2"/>
<dbReference type="BioCyc" id="MPNE272634:G1GJ3-522-MONOMER"/>
<dbReference type="EvolutionaryTrace" id="P75455"/>
<dbReference type="Proteomes" id="UP000000808">
    <property type="component" value="Chromosome"/>
</dbReference>
<dbReference type="Gene3D" id="1.10.472.40">
    <property type="entry name" value="Hypothetical protein mg237 homolog, domain 3"/>
    <property type="match status" value="1"/>
</dbReference>
<dbReference type="Gene3D" id="1.20.1480.10">
    <property type="entry name" value="hypothetical protein mp506/mpn330, domain 1"/>
    <property type="match status" value="1"/>
</dbReference>
<dbReference type="Gene3D" id="3.30.1790.10">
    <property type="entry name" value="hypothetical protein mp506/mpn330, domain 2"/>
    <property type="match status" value="1"/>
</dbReference>
<dbReference type="InterPro" id="IPR024503">
    <property type="entry name" value="DUF3196"/>
</dbReference>
<dbReference type="InterPro" id="IPR023402">
    <property type="entry name" value="Uncharacterised_MG237_central"/>
</dbReference>
<dbReference type="InterPro" id="IPR023403">
    <property type="entry name" value="Uncharacterised_MG237_N"/>
</dbReference>
<dbReference type="Pfam" id="PF11428">
    <property type="entry name" value="DUF3196"/>
    <property type="match status" value="1"/>
</dbReference>
<dbReference type="SUPFAM" id="SSF116965">
    <property type="entry name" value="Hypothetical protein MPN330"/>
    <property type="match status" value="1"/>
</dbReference>
<name>Y330_MYCPN</name>
<evidence type="ECO:0007829" key="1">
    <source>
        <dbReference type="PDB" id="1TD6"/>
    </source>
</evidence>
<feature type="chain" id="PRO_0000210476" description="Uncharacterized protein MG237 homolog">
    <location>
        <begin position="1"/>
        <end position="294"/>
    </location>
</feature>
<feature type="helix" evidence="1">
    <location>
        <begin position="22"/>
        <end position="33"/>
    </location>
</feature>
<feature type="turn" evidence="1">
    <location>
        <begin position="34"/>
        <end position="36"/>
    </location>
</feature>
<feature type="helix" evidence="1">
    <location>
        <begin position="40"/>
        <end position="56"/>
    </location>
</feature>
<feature type="helix" evidence="1">
    <location>
        <begin position="60"/>
        <end position="70"/>
    </location>
</feature>
<feature type="helix" evidence="1">
    <location>
        <begin position="78"/>
        <end position="99"/>
    </location>
</feature>
<feature type="helix" evidence="1">
    <location>
        <begin position="101"/>
        <end position="105"/>
    </location>
</feature>
<feature type="helix" evidence="1">
    <location>
        <begin position="108"/>
        <end position="116"/>
    </location>
</feature>
<feature type="turn" evidence="1">
    <location>
        <begin position="117"/>
        <end position="122"/>
    </location>
</feature>
<feature type="helix" evidence="1">
    <location>
        <begin position="123"/>
        <end position="128"/>
    </location>
</feature>
<feature type="helix" evidence="1">
    <location>
        <begin position="139"/>
        <end position="144"/>
    </location>
</feature>
<feature type="helix" evidence="1">
    <location>
        <begin position="146"/>
        <end position="149"/>
    </location>
</feature>
<feature type="helix" evidence="1">
    <location>
        <begin position="156"/>
        <end position="166"/>
    </location>
</feature>
<feature type="helix" evidence="1">
    <location>
        <begin position="170"/>
        <end position="172"/>
    </location>
</feature>
<feature type="strand" evidence="1">
    <location>
        <begin position="176"/>
        <end position="181"/>
    </location>
</feature>
<feature type="turn" evidence="1">
    <location>
        <begin position="182"/>
        <end position="185"/>
    </location>
</feature>
<feature type="strand" evidence="1">
    <location>
        <begin position="186"/>
        <end position="191"/>
    </location>
</feature>
<feature type="strand" evidence="1">
    <location>
        <begin position="194"/>
        <end position="197"/>
    </location>
</feature>
<feature type="helix" evidence="1">
    <location>
        <begin position="201"/>
        <end position="217"/>
    </location>
</feature>
<feature type="helix" evidence="1">
    <location>
        <begin position="222"/>
        <end position="238"/>
    </location>
</feature>
<feature type="turn" evidence="1">
    <location>
        <begin position="239"/>
        <end position="241"/>
    </location>
</feature>
<feature type="helix" evidence="1">
    <location>
        <begin position="248"/>
        <end position="262"/>
    </location>
</feature>
<feature type="strand" evidence="1">
    <location>
        <begin position="263"/>
        <end position="265"/>
    </location>
</feature>
<feature type="helix" evidence="1">
    <location>
        <begin position="272"/>
        <end position="281"/>
    </location>
</feature>
<feature type="turn" evidence="1">
    <location>
        <begin position="282"/>
        <end position="284"/>
    </location>
</feature>
<sequence>MINKPNQFVNHLSALKKHFASYKELREAFNDYHKHNGDELTTFFLHQFDKVMELVKQKDFKTAQSRCEEELAAPYLPKPLVSFFQSLLQLVNHDLLEQQNAALASLPAAKIIELVLQDYPNKLNMIHYLLPKTKAFVKPHLLQRLQFVLTDSELLELKRFSFFQALNQIPGFQGEQVEYFNSKLKQKFTLTLGEFEIAQQPDAKAYFEQLITQIQQLFLKEPVNAEFANEIIDAFLVSYFPLHPPVPLAQLAAKIYEYVSQIVLNEAVNLKDELIKLIVHTLYEQLDRPVGDEN</sequence>
<gene>
    <name type="ordered locus">MPN_330</name>
    <name type="ORF">F10_orf294</name>
    <name type="ORF">MP506</name>
</gene>
<accession>P75455</accession>